<accession>B3PXH2</accession>
<feature type="chain" id="PRO_1000137715" description="Chaperone protein DnaJ">
    <location>
        <begin position="1"/>
        <end position="375"/>
    </location>
</feature>
<feature type="domain" description="J" evidence="1">
    <location>
        <begin position="5"/>
        <end position="70"/>
    </location>
</feature>
<feature type="repeat" description="CXXCXGXG motif">
    <location>
        <begin position="149"/>
        <end position="156"/>
    </location>
</feature>
<feature type="repeat" description="CXXCXGXG motif">
    <location>
        <begin position="166"/>
        <end position="173"/>
    </location>
</feature>
<feature type="repeat" description="CXXCXGXG motif">
    <location>
        <begin position="188"/>
        <end position="195"/>
    </location>
</feature>
<feature type="repeat" description="CXXCXGXG motif">
    <location>
        <begin position="202"/>
        <end position="209"/>
    </location>
</feature>
<feature type="zinc finger region" description="CR-type" evidence="1">
    <location>
        <begin position="136"/>
        <end position="214"/>
    </location>
</feature>
<feature type="binding site" evidence="1">
    <location>
        <position position="149"/>
    </location>
    <ligand>
        <name>Zn(2+)</name>
        <dbReference type="ChEBI" id="CHEBI:29105"/>
        <label>1</label>
    </ligand>
</feature>
<feature type="binding site" evidence="1">
    <location>
        <position position="152"/>
    </location>
    <ligand>
        <name>Zn(2+)</name>
        <dbReference type="ChEBI" id="CHEBI:29105"/>
        <label>1</label>
    </ligand>
</feature>
<feature type="binding site" evidence="1">
    <location>
        <position position="166"/>
    </location>
    <ligand>
        <name>Zn(2+)</name>
        <dbReference type="ChEBI" id="CHEBI:29105"/>
        <label>2</label>
    </ligand>
</feature>
<feature type="binding site" evidence="1">
    <location>
        <position position="169"/>
    </location>
    <ligand>
        <name>Zn(2+)</name>
        <dbReference type="ChEBI" id="CHEBI:29105"/>
        <label>2</label>
    </ligand>
</feature>
<feature type="binding site" evidence="1">
    <location>
        <position position="188"/>
    </location>
    <ligand>
        <name>Zn(2+)</name>
        <dbReference type="ChEBI" id="CHEBI:29105"/>
        <label>2</label>
    </ligand>
</feature>
<feature type="binding site" evidence="1">
    <location>
        <position position="191"/>
    </location>
    <ligand>
        <name>Zn(2+)</name>
        <dbReference type="ChEBI" id="CHEBI:29105"/>
        <label>2</label>
    </ligand>
</feature>
<feature type="binding site" evidence="1">
    <location>
        <position position="202"/>
    </location>
    <ligand>
        <name>Zn(2+)</name>
        <dbReference type="ChEBI" id="CHEBI:29105"/>
        <label>1</label>
    </ligand>
</feature>
<feature type="binding site" evidence="1">
    <location>
        <position position="205"/>
    </location>
    <ligand>
        <name>Zn(2+)</name>
        <dbReference type="ChEBI" id="CHEBI:29105"/>
        <label>1</label>
    </ligand>
</feature>
<sequence length="375" mass="40791">MAKADFYETLGVAKSADEKELKSAFRKLAMKYHPDKNPDDKDAERKFKEINEAYEMLKDPQKRAAYDRYGHAAFEHGGMGGGGGGFAGGGFSDIFEDIFGEMMGGGRARQRSSGGRERGADLRYNMEITLEEAFSGKTAQIRVPTSITCDVCSGSGAKPGTQPKNCGTCQGSGRVRAAQGFFSIERTCPTCHGRGQIIPDPCPKCHGQGRVTEERSLSVNIPAGIEDGTRIRLQGEGEAGARGGPAGDLYIFLSVKPHEFYQRDGADLYCAVPISMTTAALGGTFDVATLDGTKSRVTVPEGTQAGKQFRLKSKGMPVLRSAQTGDLYIQIQIETPQKLTKRQRELLQEFEQISSKENNPESTGFFARMKEFFEG</sequence>
<name>DNAJ_RHIE6</name>
<evidence type="ECO:0000255" key="1">
    <source>
        <dbReference type="HAMAP-Rule" id="MF_01152"/>
    </source>
</evidence>
<comment type="function">
    <text evidence="1">Participates actively in the response to hyperosmotic and heat shock by preventing the aggregation of stress-denatured proteins and by disaggregating proteins, also in an autonomous, DnaK-independent fashion. Unfolded proteins bind initially to DnaJ; upon interaction with the DnaJ-bound protein, DnaK hydrolyzes its bound ATP, resulting in the formation of a stable complex. GrpE releases ADP from DnaK; ATP binding to DnaK triggers the release of the substrate protein, thus completing the reaction cycle. Several rounds of ATP-dependent interactions between DnaJ, DnaK and GrpE are required for fully efficient folding. Also involved, together with DnaK and GrpE, in the DNA replication of plasmids through activation of initiation proteins.</text>
</comment>
<comment type="cofactor">
    <cofactor evidence="1">
        <name>Zn(2+)</name>
        <dbReference type="ChEBI" id="CHEBI:29105"/>
    </cofactor>
    <text evidence="1">Binds 2 Zn(2+) ions per monomer.</text>
</comment>
<comment type="subunit">
    <text evidence="1">Homodimer.</text>
</comment>
<comment type="subcellular location">
    <subcellularLocation>
        <location evidence="1">Cytoplasm</location>
    </subcellularLocation>
</comment>
<comment type="domain">
    <text evidence="1">The J domain is necessary and sufficient to stimulate DnaK ATPase activity. Zinc center 1 plays an important role in the autonomous, DnaK-independent chaperone activity of DnaJ. Zinc center 2 is essential for interaction with DnaK and for DnaJ activity.</text>
</comment>
<comment type="similarity">
    <text evidence="1">Belongs to the DnaJ family.</text>
</comment>
<keyword id="KW-0143">Chaperone</keyword>
<keyword id="KW-0963">Cytoplasm</keyword>
<keyword id="KW-0235">DNA replication</keyword>
<keyword id="KW-0479">Metal-binding</keyword>
<keyword id="KW-0677">Repeat</keyword>
<keyword id="KW-0346">Stress response</keyword>
<keyword id="KW-0862">Zinc</keyword>
<keyword id="KW-0863">Zinc-finger</keyword>
<gene>
    <name evidence="1" type="primary">dnaJ</name>
    <name type="ordered locus">RHECIAT_CH0000182</name>
</gene>
<protein>
    <recommendedName>
        <fullName evidence="1">Chaperone protein DnaJ</fullName>
    </recommendedName>
</protein>
<reference key="1">
    <citation type="journal article" date="2010" name="Appl. Environ. Microbiol.">
        <title>Conserved symbiotic plasmid DNA sequences in the multireplicon pangenomic structure of Rhizobium etli.</title>
        <authorList>
            <person name="Gonzalez V."/>
            <person name="Acosta J.L."/>
            <person name="Santamaria R.I."/>
            <person name="Bustos P."/>
            <person name="Fernandez J.L."/>
            <person name="Hernandez Gonzalez I.L."/>
            <person name="Diaz R."/>
            <person name="Flores M."/>
            <person name="Palacios R."/>
            <person name="Mora J."/>
            <person name="Davila G."/>
        </authorList>
    </citation>
    <scope>NUCLEOTIDE SEQUENCE [LARGE SCALE GENOMIC DNA]</scope>
    <source>
        <strain>CIAT 652</strain>
    </source>
</reference>
<dbReference type="EMBL" id="CP001074">
    <property type="protein sequence ID" value="ACE89178.1"/>
    <property type="molecule type" value="Genomic_DNA"/>
</dbReference>
<dbReference type="SMR" id="B3PXH2"/>
<dbReference type="KEGG" id="rec:RHECIAT_CH0000182"/>
<dbReference type="eggNOG" id="COG0484">
    <property type="taxonomic scope" value="Bacteria"/>
</dbReference>
<dbReference type="HOGENOM" id="CLU_017633_0_7_5"/>
<dbReference type="Proteomes" id="UP000008817">
    <property type="component" value="Chromosome"/>
</dbReference>
<dbReference type="GO" id="GO:0005737">
    <property type="term" value="C:cytoplasm"/>
    <property type="evidence" value="ECO:0007669"/>
    <property type="project" value="UniProtKB-SubCell"/>
</dbReference>
<dbReference type="GO" id="GO:0005524">
    <property type="term" value="F:ATP binding"/>
    <property type="evidence" value="ECO:0007669"/>
    <property type="project" value="InterPro"/>
</dbReference>
<dbReference type="GO" id="GO:0031072">
    <property type="term" value="F:heat shock protein binding"/>
    <property type="evidence" value="ECO:0007669"/>
    <property type="project" value="InterPro"/>
</dbReference>
<dbReference type="GO" id="GO:0051082">
    <property type="term" value="F:unfolded protein binding"/>
    <property type="evidence" value="ECO:0007669"/>
    <property type="project" value="UniProtKB-UniRule"/>
</dbReference>
<dbReference type="GO" id="GO:0008270">
    <property type="term" value="F:zinc ion binding"/>
    <property type="evidence" value="ECO:0007669"/>
    <property type="project" value="UniProtKB-UniRule"/>
</dbReference>
<dbReference type="GO" id="GO:0051085">
    <property type="term" value="P:chaperone cofactor-dependent protein refolding"/>
    <property type="evidence" value="ECO:0007669"/>
    <property type="project" value="TreeGrafter"/>
</dbReference>
<dbReference type="GO" id="GO:0006260">
    <property type="term" value="P:DNA replication"/>
    <property type="evidence" value="ECO:0007669"/>
    <property type="project" value="UniProtKB-KW"/>
</dbReference>
<dbReference type="GO" id="GO:0042026">
    <property type="term" value="P:protein refolding"/>
    <property type="evidence" value="ECO:0007669"/>
    <property type="project" value="TreeGrafter"/>
</dbReference>
<dbReference type="GO" id="GO:0009408">
    <property type="term" value="P:response to heat"/>
    <property type="evidence" value="ECO:0007669"/>
    <property type="project" value="InterPro"/>
</dbReference>
<dbReference type="CDD" id="cd06257">
    <property type="entry name" value="DnaJ"/>
    <property type="match status" value="1"/>
</dbReference>
<dbReference type="CDD" id="cd10747">
    <property type="entry name" value="DnaJ_C"/>
    <property type="match status" value="1"/>
</dbReference>
<dbReference type="CDD" id="cd10719">
    <property type="entry name" value="DnaJ_zf"/>
    <property type="match status" value="1"/>
</dbReference>
<dbReference type="FunFam" id="1.10.287.110:FF:000034">
    <property type="entry name" value="Chaperone protein DnaJ"/>
    <property type="match status" value="1"/>
</dbReference>
<dbReference type="FunFam" id="2.10.230.10:FF:000002">
    <property type="entry name" value="Molecular chaperone DnaJ"/>
    <property type="match status" value="1"/>
</dbReference>
<dbReference type="FunFam" id="2.60.260.20:FF:000004">
    <property type="entry name" value="Molecular chaperone DnaJ"/>
    <property type="match status" value="1"/>
</dbReference>
<dbReference type="Gene3D" id="1.10.287.110">
    <property type="entry name" value="DnaJ domain"/>
    <property type="match status" value="1"/>
</dbReference>
<dbReference type="Gene3D" id="2.10.230.10">
    <property type="entry name" value="Heat shock protein DnaJ, cysteine-rich domain"/>
    <property type="match status" value="1"/>
</dbReference>
<dbReference type="Gene3D" id="2.60.260.20">
    <property type="entry name" value="Urease metallochaperone UreE, N-terminal domain"/>
    <property type="match status" value="2"/>
</dbReference>
<dbReference type="HAMAP" id="MF_01152">
    <property type="entry name" value="DnaJ"/>
    <property type="match status" value="1"/>
</dbReference>
<dbReference type="InterPro" id="IPR012724">
    <property type="entry name" value="DnaJ"/>
</dbReference>
<dbReference type="InterPro" id="IPR002939">
    <property type="entry name" value="DnaJ_C"/>
</dbReference>
<dbReference type="InterPro" id="IPR001623">
    <property type="entry name" value="DnaJ_domain"/>
</dbReference>
<dbReference type="InterPro" id="IPR018253">
    <property type="entry name" value="DnaJ_domain_CS"/>
</dbReference>
<dbReference type="InterPro" id="IPR008971">
    <property type="entry name" value="HSP40/DnaJ_pept-bd"/>
</dbReference>
<dbReference type="InterPro" id="IPR001305">
    <property type="entry name" value="HSP_DnaJ_Cys-rich_dom"/>
</dbReference>
<dbReference type="InterPro" id="IPR036410">
    <property type="entry name" value="HSP_DnaJ_Cys-rich_dom_sf"/>
</dbReference>
<dbReference type="InterPro" id="IPR036869">
    <property type="entry name" value="J_dom_sf"/>
</dbReference>
<dbReference type="NCBIfam" id="TIGR02349">
    <property type="entry name" value="DnaJ_bact"/>
    <property type="match status" value="1"/>
</dbReference>
<dbReference type="NCBIfam" id="NF008035">
    <property type="entry name" value="PRK10767.1"/>
    <property type="match status" value="1"/>
</dbReference>
<dbReference type="PANTHER" id="PTHR43096:SF48">
    <property type="entry name" value="CHAPERONE PROTEIN DNAJ"/>
    <property type="match status" value="1"/>
</dbReference>
<dbReference type="PANTHER" id="PTHR43096">
    <property type="entry name" value="DNAJ HOMOLOG 1, MITOCHONDRIAL-RELATED"/>
    <property type="match status" value="1"/>
</dbReference>
<dbReference type="Pfam" id="PF00226">
    <property type="entry name" value="DnaJ"/>
    <property type="match status" value="1"/>
</dbReference>
<dbReference type="Pfam" id="PF01556">
    <property type="entry name" value="DnaJ_C"/>
    <property type="match status" value="1"/>
</dbReference>
<dbReference type="Pfam" id="PF00684">
    <property type="entry name" value="DnaJ_CXXCXGXG"/>
    <property type="match status" value="1"/>
</dbReference>
<dbReference type="PRINTS" id="PR00625">
    <property type="entry name" value="JDOMAIN"/>
</dbReference>
<dbReference type="SMART" id="SM00271">
    <property type="entry name" value="DnaJ"/>
    <property type="match status" value="1"/>
</dbReference>
<dbReference type="SUPFAM" id="SSF46565">
    <property type="entry name" value="Chaperone J-domain"/>
    <property type="match status" value="1"/>
</dbReference>
<dbReference type="SUPFAM" id="SSF57938">
    <property type="entry name" value="DnaJ/Hsp40 cysteine-rich domain"/>
    <property type="match status" value="1"/>
</dbReference>
<dbReference type="SUPFAM" id="SSF49493">
    <property type="entry name" value="HSP40/DnaJ peptide-binding domain"/>
    <property type="match status" value="2"/>
</dbReference>
<dbReference type="PROSITE" id="PS00636">
    <property type="entry name" value="DNAJ_1"/>
    <property type="match status" value="1"/>
</dbReference>
<dbReference type="PROSITE" id="PS50076">
    <property type="entry name" value="DNAJ_2"/>
    <property type="match status" value="1"/>
</dbReference>
<dbReference type="PROSITE" id="PS51188">
    <property type="entry name" value="ZF_CR"/>
    <property type="match status" value="1"/>
</dbReference>
<organism>
    <name type="scientific">Rhizobium etli (strain CIAT 652)</name>
    <dbReference type="NCBI Taxonomy" id="491916"/>
    <lineage>
        <taxon>Bacteria</taxon>
        <taxon>Pseudomonadati</taxon>
        <taxon>Pseudomonadota</taxon>
        <taxon>Alphaproteobacteria</taxon>
        <taxon>Hyphomicrobiales</taxon>
        <taxon>Rhizobiaceae</taxon>
        <taxon>Rhizobium/Agrobacterium group</taxon>
        <taxon>Rhizobium</taxon>
    </lineage>
</organism>
<proteinExistence type="inferred from homology"/>